<accession>B0SM57</accession>
<proteinExistence type="inferred from homology"/>
<feature type="chain" id="PRO_1000095796" description="Tryptophan synthase beta chain">
    <location>
        <begin position="1"/>
        <end position="396"/>
    </location>
</feature>
<feature type="modified residue" description="N6-(pyridoxal phosphate)lysine" evidence="1">
    <location>
        <position position="88"/>
    </location>
</feature>
<sequence length="396" mass="43202">MGKNQPGYFGEFGGRYAPEILTEALEELESTYQKLKKSKKFKKELEFYLQNYVGRPSPLTYAERLTKQWGGARIWLKREDLNHTGAHKINNAIGQALIAKFMGKKRIIAETGAGQHGLATATVGAMFGMETVVYMGAVDVERQNLNAKKIEMLGAKILPVTAGEATLKEATSEAMRDWALNVSTTHYIVGSAIGPHPFPTIVRDLQSIIGKEARSQFKKRNHNLPHAIVACVGGGSNAIGMFHAFLKDKHVAIYGAEAGGLGPKPGEHSATLTYGKTGFLHGTKTLIIQDEAGQIVPAHSVSAGLDYPGVGPEHAYLSQTKRVDYRMVTDEQALDCFLEVTRVEGIIPALETAHAFYVARDVAKDLGKKKDLIICLSGRGDKDVTEVLRILGERSK</sequence>
<organism>
    <name type="scientific">Leptospira biflexa serovar Patoc (strain Patoc 1 / ATCC 23582 / Paris)</name>
    <dbReference type="NCBI Taxonomy" id="456481"/>
    <lineage>
        <taxon>Bacteria</taxon>
        <taxon>Pseudomonadati</taxon>
        <taxon>Spirochaetota</taxon>
        <taxon>Spirochaetia</taxon>
        <taxon>Leptospirales</taxon>
        <taxon>Leptospiraceae</taxon>
        <taxon>Leptospira</taxon>
    </lineage>
</organism>
<evidence type="ECO:0000255" key="1">
    <source>
        <dbReference type="HAMAP-Rule" id="MF_00133"/>
    </source>
</evidence>
<name>TRPB_LEPBP</name>
<keyword id="KW-0028">Amino-acid biosynthesis</keyword>
<keyword id="KW-0057">Aromatic amino acid biosynthesis</keyword>
<keyword id="KW-0456">Lyase</keyword>
<keyword id="KW-0663">Pyridoxal phosphate</keyword>
<keyword id="KW-1185">Reference proteome</keyword>
<keyword id="KW-0822">Tryptophan biosynthesis</keyword>
<gene>
    <name evidence="1" type="primary">trpB</name>
    <name type="ordered locus">LEPBI_I2608</name>
</gene>
<comment type="function">
    <text evidence="1">The beta subunit is responsible for the synthesis of L-tryptophan from indole and L-serine.</text>
</comment>
<comment type="catalytic activity">
    <reaction evidence="1">
        <text>(1S,2R)-1-C-(indol-3-yl)glycerol 3-phosphate + L-serine = D-glyceraldehyde 3-phosphate + L-tryptophan + H2O</text>
        <dbReference type="Rhea" id="RHEA:10532"/>
        <dbReference type="ChEBI" id="CHEBI:15377"/>
        <dbReference type="ChEBI" id="CHEBI:33384"/>
        <dbReference type="ChEBI" id="CHEBI:57912"/>
        <dbReference type="ChEBI" id="CHEBI:58866"/>
        <dbReference type="ChEBI" id="CHEBI:59776"/>
        <dbReference type="EC" id="4.2.1.20"/>
    </reaction>
</comment>
<comment type="cofactor">
    <cofactor evidence="1">
        <name>pyridoxal 5'-phosphate</name>
        <dbReference type="ChEBI" id="CHEBI:597326"/>
    </cofactor>
</comment>
<comment type="pathway">
    <text evidence="1">Amino-acid biosynthesis; L-tryptophan biosynthesis; L-tryptophan from chorismate: step 5/5.</text>
</comment>
<comment type="subunit">
    <text evidence="1">Tetramer of two alpha and two beta chains.</text>
</comment>
<comment type="similarity">
    <text evidence="1">Belongs to the TrpB family.</text>
</comment>
<reference key="1">
    <citation type="journal article" date="2008" name="PLoS ONE">
        <title>Genome sequence of the saprophyte Leptospira biflexa provides insights into the evolution of Leptospira and the pathogenesis of leptospirosis.</title>
        <authorList>
            <person name="Picardeau M."/>
            <person name="Bulach D.M."/>
            <person name="Bouchier C."/>
            <person name="Zuerner R.L."/>
            <person name="Zidane N."/>
            <person name="Wilson P.J."/>
            <person name="Creno S."/>
            <person name="Kuczek E.S."/>
            <person name="Bommezzadri S."/>
            <person name="Davis J.C."/>
            <person name="McGrath A."/>
            <person name="Johnson M.J."/>
            <person name="Boursaux-Eude C."/>
            <person name="Seemann T."/>
            <person name="Rouy Z."/>
            <person name="Coppel R.L."/>
            <person name="Rood J.I."/>
            <person name="Lajus A."/>
            <person name="Davies J.K."/>
            <person name="Medigue C."/>
            <person name="Adler B."/>
        </authorList>
    </citation>
    <scope>NUCLEOTIDE SEQUENCE [LARGE SCALE GENOMIC DNA]</scope>
    <source>
        <strain>Patoc 1 / ATCC 23582 / Paris</strain>
    </source>
</reference>
<protein>
    <recommendedName>
        <fullName evidence="1">Tryptophan synthase beta chain</fullName>
        <ecNumber evidence="1">4.2.1.20</ecNumber>
    </recommendedName>
</protein>
<dbReference type="EC" id="4.2.1.20" evidence="1"/>
<dbReference type="EMBL" id="CP000786">
    <property type="protein sequence ID" value="ABZ98687.1"/>
    <property type="molecule type" value="Genomic_DNA"/>
</dbReference>
<dbReference type="RefSeq" id="WP_012389547.1">
    <property type="nucleotide sequence ID" value="NC_010602.1"/>
</dbReference>
<dbReference type="SMR" id="B0SM57"/>
<dbReference type="STRING" id="456481.LEPBI_I2608"/>
<dbReference type="KEGG" id="lbi:LEPBI_I2608"/>
<dbReference type="HOGENOM" id="CLU_016734_3_1_12"/>
<dbReference type="OrthoDB" id="9766131at2"/>
<dbReference type="BioCyc" id="LBIF456481:LEPBI_RS12830-MONOMER"/>
<dbReference type="UniPathway" id="UPA00035">
    <property type="reaction ID" value="UER00044"/>
</dbReference>
<dbReference type="Proteomes" id="UP000001847">
    <property type="component" value="Chromosome I"/>
</dbReference>
<dbReference type="GO" id="GO:0005737">
    <property type="term" value="C:cytoplasm"/>
    <property type="evidence" value="ECO:0007669"/>
    <property type="project" value="TreeGrafter"/>
</dbReference>
<dbReference type="GO" id="GO:0004834">
    <property type="term" value="F:tryptophan synthase activity"/>
    <property type="evidence" value="ECO:0007669"/>
    <property type="project" value="UniProtKB-UniRule"/>
</dbReference>
<dbReference type="CDD" id="cd06446">
    <property type="entry name" value="Trp-synth_B"/>
    <property type="match status" value="1"/>
</dbReference>
<dbReference type="FunFam" id="3.40.50.1100:FF:000001">
    <property type="entry name" value="Tryptophan synthase beta chain"/>
    <property type="match status" value="1"/>
</dbReference>
<dbReference type="FunFam" id="3.40.50.1100:FF:000004">
    <property type="entry name" value="Tryptophan synthase beta chain"/>
    <property type="match status" value="1"/>
</dbReference>
<dbReference type="Gene3D" id="3.40.50.1100">
    <property type="match status" value="2"/>
</dbReference>
<dbReference type="HAMAP" id="MF_00133">
    <property type="entry name" value="Trp_synth_beta"/>
    <property type="match status" value="1"/>
</dbReference>
<dbReference type="InterPro" id="IPR006653">
    <property type="entry name" value="Trp_synth_b_CS"/>
</dbReference>
<dbReference type="InterPro" id="IPR006654">
    <property type="entry name" value="Trp_synth_beta"/>
</dbReference>
<dbReference type="InterPro" id="IPR023026">
    <property type="entry name" value="Trp_synth_beta/beta-like"/>
</dbReference>
<dbReference type="InterPro" id="IPR001926">
    <property type="entry name" value="TrpB-like_PALP"/>
</dbReference>
<dbReference type="InterPro" id="IPR036052">
    <property type="entry name" value="TrpB-like_PALP_sf"/>
</dbReference>
<dbReference type="NCBIfam" id="TIGR00263">
    <property type="entry name" value="trpB"/>
    <property type="match status" value="1"/>
</dbReference>
<dbReference type="PANTHER" id="PTHR48077:SF3">
    <property type="entry name" value="TRYPTOPHAN SYNTHASE"/>
    <property type="match status" value="1"/>
</dbReference>
<dbReference type="PANTHER" id="PTHR48077">
    <property type="entry name" value="TRYPTOPHAN SYNTHASE-RELATED"/>
    <property type="match status" value="1"/>
</dbReference>
<dbReference type="Pfam" id="PF00291">
    <property type="entry name" value="PALP"/>
    <property type="match status" value="1"/>
</dbReference>
<dbReference type="PIRSF" id="PIRSF001413">
    <property type="entry name" value="Trp_syn_beta"/>
    <property type="match status" value="1"/>
</dbReference>
<dbReference type="SUPFAM" id="SSF53686">
    <property type="entry name" value="Tryptophan synthase beta subunit-like PLP-dependent enzymes"/>
    <property type="match status" value="1"/>
</dbReference>
<dbReference type="PROSITE" id="PS00168">
    <property type="entry name" value="TRP_SYNTHASE_BETA"/>
    <property type="match status" value="1"/>
</dbReference>